<name>RL28_NEIMB</name>
<proteinExistence type="inferred from homology"/>
<feature type="chain" id="PRO_0000178516" description="Large ribosomal subunit protein bL28">
    <location>
        <begin position="1"/>
        <end position="77"/>
    </location>
</feature>
<feature type="region of interest" description="Disordered" evidence="2">
    <location>
        <begin position="1"/>
        <end position="26"/>
    </location>
</feature>
<reference key="1">
    <citation type="journal article" date="2000" name="Science">
        <title>Complete genome sequence of Neisseria meningitidis serogroup B strain MC58.</title>
        <authorList>
            <person name="Tettelin H."/>
            <person name="Saunders N.J."/>
            <person name="Heidelberg J.F."/>
            <person name="Jeffries A.C."/>
            <person name="Nelson K.E."/>
            <person name="Eisen J.A."/>
            <person name="Ketchum K.A."/>
            <person name="Hood D.W."/>
            <person name="Peden J.F."/>
            <person name="Dodson R.J."/>
            <person name="Nelson W.C."/>
            <person name="Gwinn M.L."/>
            <person name="DeBoy R.T."/>
            <person name="Peterson J.D."/>
            <person name="Hickey E.K."/>
            <person name="Haft D.H."/>
            <person name="Salzberg S.L."/>
            <person name="White O."/>
            <person name="Fleischmann R.D."/>
            <person name="Dougherty B.A."/>
            <person name="Mason T.M."/>
            <person name="Ciecko A."/>
            <person name="Parksey D.S."/>
            <person name="Blair E."/>
            <person name="Cittone H."/>
            <person name="Clark E.B."/>
            <person name="Cotton M.D."/>
            <person name="Utterback T.R."/>
            <person name="Khouri H.M."/>
            <person name="Qin H."/>
            <person name="Vamathevan J.J."/>
            <person name="Gill J."/>
            <person name="Scarlato V."/>
            <person name="Masignani V."/>
            <person name="Pizza M."/>
            <person name="Grandi G."/>
            <person name="Sun L."/>
            <person name="Smith H.O."/>
            <person name="Fraser C.M."/>
            <person name="Moxon E.R."/>
            <person name="Rappuoli R."/>
            <person name="Venter J.C."/>
        </authorList>
    </citation>
    <scope>NUCLEOTIDE SEQUENCE [LARGE SCALE GENOMIC DNA]</scope>
    <source>
        <strain>ATCC BAA-335 / MC58</strain>
    </source>
</reference>
<sequence>MARVCKVTGKRPMSGNNVSHANNKTKRRFLPNLQSRRFWVESENRWVRLRVSNAALRTIDKVGIDVVLADLRARGEA</sequence>
<organism>
    <name type="scientific">Neisseria meningitidis serogroup B (strain ATCC BAA-335 / MC58)</name>
    <dbReference type="NCBI Taxonomy" id="122586"/>
    <lineage>
        <taxon>Bacteria</taxon>
        <taxon>Pseudomonadati</taxon>
        <taxon>Pseudomonadota</taxon>
        <taxon>Betaproteobacteria</taxon>
        <taxon>Neisseriales</taxon>
        <taxon>Neisseriaceae</taxon>
        <taxon>Neisseria</taxon>
    </lineage>
</organism>
<comment type="similarity">
    <text evidence="1">Belongs to the bacterial ribosomal protein bL28 family.</text>
</comment>
<gene>
    <name evidence="1" type="primary">rpmB</name>
    <name type="ordered locus">NMB0321</name>
</gene>
<keyword id="KW-1185">Reference proteome</keyword>
<keyword id="KW-0687">Ribonucleoprotein</keyword>
<keyword id="KW-0689">Ribosomal protein</keyword>
<dbReference type="EMBL" id="AE002098">
    <property type="protein sequence ID" value="AAF40766.1"/>
    <property type="molecule type" value="Genomic_DNA"/>
</dbReference>
<dbReference type="PIR" id="D81212">
    <property type="entry name" value="D81212"/>
</dbReference>
<dbReference type="RefSeq" id="NP_273370.1">
    <property type="nucleotide sequence ID" value="NC_003112.2"/>
</dbReference>
<dbReference type="RefSeq" id="WP_002216391.1">
    <property type="nucleotide sequence ID" value="NC_003112.2"/>
</dbReference>
<dbReference type="SMR" id="P66151"/>
<dbReference type="FunCoup" id="P66151">
    <property type="interactions" value="428"/>
</dbReference>
<dbReference type="STRING" id="122586.NMB0321"/>
<dbReference type="PaxDb" id="122586-NMB0321"/>
<dbReference type="GeneID" id="93387412"/>
<dbReference type="KEGG" id="nme:NMB0321"/>
<dbReference type="PATRIC" id="fig|122586.8.peg.406"/>
<dbReference type="HOGENOM" id="CLU_064548_3_1_4"/>
<dbReference type="InParanoid" id="P66151"/>
<dbReference type="OrthoDB" id="9805609at2"/>
<dbReference type="PRO" id="PR:P66151"/>
<dbReference type="Proteomes" id="UP000000425">
    <property type="component" value="Chromosome"/>
</dbReference>
<dbReference type="GO" id="GO:0022625">
    <property type="term" value="C:cytosolic large ribosomal subunit"/>
    <property type="evidence" value="ECO:0000318"/>
    <property type="project" value="GO_Central"/>
</dbReference>
<dbReference type="GO" id="GO:0003735">
    <property type="term" value="F:structural constituent of ribosome"/>
    <property type="evidence" value="ECO:0000318"/>
    <property type="project" value="GO_Central"/>
</dbReference>
<dbReference type="GO" id="GO:0006412">
    <property type="term" value="P:translation"/>
    <property type="evidence" value="ECO:0007669"/>
    <property type="project" value="UniProtKB-UniRule"/>
</dbReference>
<dbReference type="FunFam" id="2.30.170.40:FF:000001">
    <property type="entry name" value="50S ribosomal protein L28"/>
    <property type="match status" value="1"/>
</dbReference>
<dbReference type="Gene3D" id="2.30.170.40">
    <property type="entry name" value="Ribosomal protein L28/L24"/>
    <property type="match status" value="1"/>
</dbReference>
<dbReference type="HAMAP" id="MF_00373">
    <property type="entry name" value="Ribosomal_bL28"/>
    <property type="match status" value="1"/>
</dbReference>
<dbReference type="InterPro" id="IPR026569">
    <property type="entry name" value="Ribosomal_bL28"/>
</dbReference>
<dbReference type="InterPro" id="IPR034704">
    <property type="entry name" value="Ribosomal_bL28/bL31-like_sf"/>
</dbReference>
<dbReference type="InterPro" id="IPR001383">
    <property type="entry name" value="Ribosomal_bL28_bact-type"/>
</dbReference>
<dbReference type="InterPro" id="IPR037147">
    <property type="entry name" value="Ribosomal_bL28_sf"/>
</dbReference>
<dbReference type="NCBIfam" id="TIGR00009">
    <property type="entry name" value="L28"/>
    <property type="match status" value="1"/>
</dbReference>
<dbReference type="PANTHER" id="PTHR13528">
    <property type="entry name" value="39S RIBOSOMAL PROTEIN L28, MITOCHONDRIAL"/>
    <property type="match status" value="1"/>
</dbReference>
<dbReference type="PANTHER" id="PTHR13528:SF2">
    <property type="entry name" value="LARGE RIBOSOMAL SUBUNIT PROTEIN BL28M"/>
    <property type="match status" value="1"/>
</dbReference>
<dbReference type="Pfam" id="PF00830">
    <property type="entry name" value="Ribosomal_L28"/>
    <property type="match status" value="1"/>
</dbReference>
<dbReference type="SUPFAM" id="SSF143800">
    <property type="entry name" value="L28p-like"/>
    <property type="match status" value="1"/>
</dbReference>
<accession>P66151</accession>
<accession>Q9JQQ3</accession>
<protein>
    <recommendedName>
        <fullName evidence="1">Large ribosomal subunit protein bL28</fullName>
    </recommendedName>
    <alternativeName>
        <fullName evidence="3">50S ribosomal protein L28</fullName>
    </alternativeName>
</protein>
<evidence type="ECO:0000255" key="1">
    <source>
        <dbReference type="HAMAP-Rule" id="MF_00373"/>
    </source>
</evidence>
<evidence type="ECO:0000256" key="2">
    <source>
        <dbReference type="SAM" id="MobiDB-lite"/>
    </source>
</evidence>
<evidence type="ECO:0000305" key="3"/>